<accession>Q01784</accession>
<comment type="function">
    <text evidence="1">Possesses antifungal activity.</text>
</comment>
<comment type="subcellular location">
    <subcellularLocation>
        <location evidence="1">Secreted</location>
    </subcellularLocation>
</comment>
<comment type="tissue specificity">
    <text>Pods.</text>
</comment>
<comment type="induction">
    <text>Upon contact with the plant pathogen fungus Fusarium solani.</text>
</comment>
<comment type="similarity">
    <text evidence="3">Belongs to the DEFL family.</text>
</comment>
<organism>
    <name type="scientific">Pisum sativum</name>
    <name type="common">Garden pea</name>
    <name type="synonym">Lathyrus oleraceus</name>
    <dbReference type="NCBI Taxonomy" id="3888"/>
    <lineage>
        <taxon>Eukaryota</taxon>
        <taxon>Viridiplantae</taxon>
        <taxon>Streptophyta</taxon>
        <taxon>Embryophyta</taxon>
        <taxon>Tracheophyta</taxon>
        <taxon>Spermatophyta</taxon>
        <taxon>Magnoliopsida</taxon>
        <taxon>eudicotyledons</taxon>
        <taxon>Gunneridae</taxon>
        <taxon>Pentapetalae</taxon>
        <taxon>rosids</taxon>
        <taxon>fabids</taxon>
        <taxon>Fabales</taxon>
        <taxon>Fabaceae</taxon>
        <taxon>Papilionoideae</taxon>
        <taxon>50 kb inversion clade</taxon>
        <taxon>NPAAA clade</taxon>
        <taxon>Hologalegina</taxon>
        <taxon>IRL clade</taxon>
        <taxon>Fabeae</taxon>
        <taxon>Pisum</taxon>
    </lineage>
</organism>
<proteinExistence type="evidence at transcript level"/>
<protein>
    <recommendedName>
        <fullName>Defensin-like protein 39</fullName>
    </recommendedName>
    <alternativeName>
        <fullName>Disease resistance response protein 39</fullName>
    </alternativeName>
</protein>
<feature type="signal peptide" evidence="2">
    <location>
        <begin position="1"/>
        <end position="28"/>
    </location>
</feature>
<feature type="chain" id="PRO_0000007046" description="Defensin-like protein 39">
    <location>
        <begin position="29"/>
        <end position="74"/>
    </location>
</feature>
<feature type="disulfide bond" evidence="1">
    <location>
        <begin position="31"/>
        <end position="74"/>
    </location>
</feature>
<feature type="disulfide bond" evidence="1">
    <location>
        <begin position="42"/>
        <end position="63"/>
    </location>
</feature>
<feature type="disulfide bond" evidence="1">
    <location>
        <begin position="48"/>
        <end position="68"/>
    </location>
</feature>
<feature type="disulfide bond" evidence="1">
    <location>
        <begin position="52"/>
        <end position="70"/>
    </location>
</feature>
<gene>
    <name type="primary">PI39</name>
</gene>
<evidence type="ECO:0000250" key="1"/>
<evidence type="ECO:0000255" key="2"/>
<evidence type="ECO:0000305" key="3"/>
<sequence length="74" mass="8255">MEKKSLAALSFLLLLVLFVAQEIVVTEANTCEHLADTYRGVCFTNASCDDHCKNKAHLISGTCHDWKCFCTQNC</sequence>
<name>DF39_PEA</name>
<reference key="1">
    <citation type="journal article" date="1991" name="Mol. Plant Microbe Interact.">
        <title>The Fusarium solani-induced expression of a pea gene family encoding high cysteine content proteins.</title>
        <authorList>
            <person name="Chiang C.C."/>
            <person name="Hadwiger L.A."/>
        </authorList>
    </citation>
    <scope>NUCLEOTIDE SEQUENCE [MRNA]</scope>
    <source>
        <strain>cv. Alaska</strain>
    </source>
</reference>
<dbReference type="EMBL" id="L01579">
    <property type="protein sequence ID" value="AAA79118.1"/>
    <property type="molecule type" value="mRNA"/>
</dbReference>
<dbReference type="PIR" id="T06766">
    <property type="entry name" value="T06766"/>
</dbReference>
<dbReference type="SMR" id="Q01784"/>
<dbReference type="OrthoDB" id="1382774at2759"/>
<dbReference type="GO" id="GO:0005576">
    <property type="term" value="C:extracellular region"/>
    <property type="evidence" value="ECO:0007669"/>
    <property type="project" value="UniProtKB-SubCell"/>
</dbReference>
<dbReference type="GO" id="GO:0050832">
    <property type="term" value="P:defense response to fungus"/>
    <property type="evidence" value="ECO:0007669"/>
    <property type="project" value="UniProtKB-KW"/>
</dbReference>
<dbReference type="GO" id="GO:0031640">
    <property type="term" value="P:killing of cells of another organism"/>
    <property type="evidence" value="ECO:0007669"/>
    <property type="project" value="UniProtKB-KW"/>
</dbReference>
<dbReference type="Gene3D" id="3.30.30.10">
    <property type="entry name" value="Knottin, scorpion toxin-like"/>
    <property type="match status" value="1"/>
</dbReference>
<dbReference type="InterPro" id="IPR003614">
    <property type="entry name" value="Scorpion_toxin-like"/>
</dbReference>
<dbReference type="InterPro" id="IPR036574">
    <property type="entry name" value="Scorpion_toxin-like_sf"/>
</dbReference>
<dbReference type="PANTHER" id="PTHR33147:SF56">
    <property type="entry name" value="DEFENSIN"/>
    <property type="match status" value="1"/>
</dbReference>
<dbReference type="PANTHER" id="PTHR33147">
    <property type="entry name" value="DEFENSIN-LIKE PROTEIN 1"/>
    <property type="match status" value="1"/>
</dbReference>
<dbReference type="Pfam" id="PF00304">
    <property type="entry name" value="Gamma-thionin"/>
    <property type="match status" value="1"/>
</dbReference>
<dbReference type="SMART" id="SM00505">
    <property type="entry name" value="Knot1"/>
    <property type="match status" value="1"/>
</dbReference>
<dbReference type="SUPFAM" id="SSF57095">
    <property type="entry name" value="Scorpion toxin-like"/>
    <property type="match status" value="1"/>
</dbReference>
<keyword id="KW-0929">Antimicrobial</keyword>
<keyword id="KW-1015">Disulfide bond</keyword>
<keyword id="KW-0295">Fungicide</keyword>
<keyword id="KW-0568">Pathogenesis-related protein</keyword>
<keyword id="KW-0611">Plant defense</keyword>
<keyword id="KW-0964">Secreted</keyword>
<keyword id="KW-0732">Signal</keyword>